<gene>
    <name evidence="1" type="primary">rplI</name>
    <name type="ordered locus">USA300HOU_0015</name>
</gene>
<organism>
    <name type="scientific">Staphylococcus aureus (strain USA300 / TCH1516)</name>
    <dbReference type="NCBI Taxonomy" id="451516"/>
    <lineage>
        <taxon>Bacteria</taxon>
        <taxon>Bacillati</taxon>
        <taxon>Bacillota</taxon>
        <taxon>Bacilli</taxon>
        <taxon>Bacillales</taxon>
        <taxon>Staphylococcaceae</taxon>
        <taxon>Staphylococcus</taxon>
    </lineage>
</organism>
<dbReference type="EMBL" id="CP000730">
    <property type="protein sequence ID" value="ABX28061.1"/>
    <property type="molecule type" value="Genomic_DNA"/>
</dbReference>
<dbReference type="RefSeq" id="WP_000864305.1">
    <property type="nucleotide sequence ID" value="NC_010079.1"/>
</dbReference>
<dbReference type="SMR" id="A8YYT8"/>
<dbReference type="KEGG" id="sax:USA300HOU_0015"/>
<dbReference type="HOGENOM" id="CLU_078938_3_2_9"/>
<dbReference type="GO" id="GO:1990904">
    <property type="term" value="C:ribonucleoprotein complex"/>
    <property type="evidence" value="ECO:0007669"/>
    <property type="project" value="UniProtKB-KW"/>
</dbReference>
<dbReference type="GO" id="GO:0005840">
    <property type="term" value="C:ribosome"/>
    <property type="evidence" value="ECO:0007669"/>
    <property type="project" value="UniProtKB-KW"/>
</dbReference>
<dbReference type="GO" id="GO:0019843">
    <property type="term" value="F:rRNA binding"/>
    <property type="evidence" value="ECO:0007669"/>
    <property type="project" value="UniProtKB-UniRule"/>
</dbReference>
<dbReference type="GO" id="GO:0003735">
    <property type="term" value="F:structural constituent of ribosome"/>
    <property type="evidence" value="ECO:0007669"/>
    <property type="project" value="InterPro"/>
</dbReference>
<dbReference type="GO" id="GO:0006412">
    <property type="term" value="P:translation"/>
    <property type="evidence" value="ECO:0007669"/>
    <property type="project" value="UniProtKB-UniRule"/>
</dbReference>
<dbReference type="FunFam" id="3.10.430.100:FF:000002">
    <property type="entry name" value="50S ribosomal protein L9"/>
    <property type="match status" value="1"/>
</dbReference>
<dbReference type="FunFam" id="3.40.5.10:FF:000002">
    <property type="entry name" value="50S ribosomal protein L9"/>
    <property type="match status" value="1"/>
</dbReference>
<dbReference type="Gene3D" id="3.10.430.100">
    <property type="entry name" value="Ribosomal protein L9, C-terminal domain"/>
    <property type="match status" value="1"/>
</dbReference>
<dbReference type="Gene3D" id="3.40.5.10">
    <property type="entry name" value="Ribosomal protein L9, N-terminal domain"/>
    <property type="match status" value="1"/>
</dbReference>
<dbReference type="HAMAP" id="MF_00503">
    <property type="entry name" value="Ribosomal_bL9"/>
    <property type="match status" value="1"/>
</dbReference>
<dbReference type="InterPro" id="IPR000244">
    <property type="entry name" value="Ribosomal_bL9"/>
</dbReference>
<dbReference type="InterPro" id="IPR009027">
    <property type="entry name" value="Ribosomal_bL9/RNase_H1_N"/>
</dbReference>
<dbReference type="InterPro" id="IPR020594">
    <property type="entry name" value="Ribosomal_bL9_bac/chp"/>
</dbReference>
<dbReference type="InterPro" id="IPR020069">
    <property type="entry name" value="Ribosomal_bL9_C"/>
</dbReference>
<dbReference type="InterPro" id="IPR036791">
    <property type="entry name" value="Ribosomal_bL9_C_sf"/>
</dbReference>
<dbReference type="InterPro" id="IPR020070">
    <property type="entry name" value="Ribosomal_bL9_N"/>
</dbReference>
<dbReference type="InterPro" id="IPR036935">
    <property type="entry name" value="Ribosomal_bL9_N_sf"/>
</dbReference>
<dbReference type="NCBIfam" id="TIGR00158">
    <property type="entry name" value="L9"/>
    <property type="match status" value="1"/>
</dbReference>
<dbReference type="PANTHER" id="PTHR21368">
    <property type="entry name" value="50S RIBOSOMAL PROTEIN L9"/>
    <property type="match status" value="1"/>
</dbReference>
<dbReference type="Pfam" id="PF03948">
    <property type="entry name" value="Ribosomal_L9_C"/>
    <property type="match status" value="1"/>
</dbReference>
<dbReference type="Pfam" id="PF01281">
    <property type="entry name" value="Ribosomal_L9_N"/>
    <property type="match status" value="1"/>
</dbReference>
<dbReference type="SUPFAM" id="SSF55658">
    <property type="entry name" value="L9 N-domain-like"/>
    <property type="match status" value="1"/>
</dbReference>
<dbReference type="SUPFAM" id="SSF55653">
    <property type="entry name" value="Ribosomal protein L9 C-domain"/>
    <property type="match status" value="1"/>
</dbReference>
<dbReference type="PROSITE" id="PS00651">
    <property type="entry name" value="RIBOSOMAL_L9"/>
    <property type="match status" value="1"/>
</dbReference>
<reference key="1">
    <citation type="journal article" date="2007" name="BMC Microbiol.">
        <title>Subtle genetic changes enhance virulence of methicillin resistant and sensitive Staphylococcus aureus.</title>
        <authorList>
            <person name="Highlander S.K."/>
            <person name="Hulten K.G."/>
            <person name="Qin X."/>
            <person name="Jiang H."/>
            <person name="Yerrapragada S."/>
            <person name="Mason E.O. Jr."/>
            <person name="Shang Y."/>
            <person name="Williams T.M."/>
            <person name="Fortunov R.M."/>
            <person name="Liu Y."/>
            <person name="Igboeli O."/>
            <person name="Petrosino J."/>
            <person name="Tirumalai M."/>
            <person name="Uzman A."/>
            <person name="Fox G.E."/>
            <person name="Cardenas A.M."/>
            <person name="Muzny D.M."/>
            <person name="Hemphill L."/>
            <person name="Ding Y."/>
            <person name="Dugan S."/>
            <person name="Blyth P.R."/>
            <person name="Buhay C.J."/>
            <person name="Dinh H.H."/>
            <person name="Hawes A.C."/>
            <person name="Holder M."/>
            <person name="Kovar C.L."/>
            <person name="Lee S.L."/>
            <person name="Liu W."/>
            <person name="Nazareth L.V."/>
            <person name="Wang Q."/>
            <person name="Zhou J."/>
            <person name="Kaplan S.L."/>
            <person name="Weinstock G.M."/>
        </authorList>
    </citation>
    <scope>NUCLEOTIDE SEQUENCE [LARGE SCALE GENOMIC DNA]</scope>
    <source>
        <strain>USA300 / TCH1516</strain>
    </source>
</reference>
<protein>
    <recommendedName>
        <fullName evidence="1">Large ribosomal subunit protein bL9</fullName>
    </recommendedName>
    <alternativeName>
        <fullName evidence="2">50S ribosomal protein L9</fullName>
    </alternativeName>
</protein>
<feature type="chain" id="PRO_1000081506" description="Large ribosomal subunit protein bL9">
    <location>
        <begin position="1"/>
        <end position="148"/>
    </location>
</feature>
<sequence>MKVIFTQDVKGKGKKGEVKEVPVGYANNFLLKKNYAVEATPGNLKQLELQKKRAKQERQQEIEDAKALKETLSNIEVEVSAKTGEGGKLFGSVSTKQIAEALKAQHDIKIDKRKMDLPNGIHSLGYTNVPVKLDKEVEGTIRVHTVEQ</sequence>
<evidence type="ECO:0000255" key="1">
    <source>
        <dbReference type="HAMAP-Rule" id="MF_00503"/>
    </source>
</evidence>
<evidence type="ECO:0000305" key="2"/>
<keyword id="KW-0687">Ribonucleoprotein</keyword>
<keyword id="KW-0689">Ribosomal protein</keyword>
<keyword id="KW-0694">RNA-binding</keyword>
<keyword id="KW-0699">rRNA-binding</keyword>
<accession>A8YYT8</accession>
<name>RL9_STAAT</name>
<proteinExistence type="inferred from homology"/>
<comment type="function">
    <text evidence="1">Binds to the 23S rRNA.</text>
</comment>
<comment type="similarity">
    <text evidence="1">Belongs to the bacterial ribosomal protein bL9 family.</text>
</comment>